<dbReference type="EMBL" id="CP001063">
    <property type="protein sequence ID" value="ACD08942.1"/>
    <property type="molecule type" value="Genomic_DNA"/>
</dbReference>
<dbReference type="RefSeq" id="WP_000156249.1">
    <property type="nucleotide sequence ID" value="NC_010658.1"/>
</dbReference>
<dbReference type="STRING" id="344609.SbBS512_E2086"/>
<dbReference type="KEGG" id="sbc:SbBS512_E2086"/>
<dbReference type="HOGENOM" id="CLU_133645_0_0_6"/>
<dbReference type="Proteomes" id="UP000001030">
    <property type="component" value="Chromosome"/>
</dbReference>
<dbReference type="GO" id="GO:0005886">
    <property type="term" value="C:plasma membrane"/>
    <property type="evidence" value="ECO:0007669"/>
    <property type="project" value="UniProtKB-SubCell"/>
</dbReference>
<dbReference type="HAMAP" id="MF_01071">
    <property type="entry name" value="UPF0266"/>
    <property type="match status" value="1"/>
</dbReference>
<dbReference type="InterPro" id="IPR009328">
    <property type="entry name" value="DUF986"/>
</dbReference>
<dbReference type="NCBIfam" id="NF002791">
    <property type="entry name" value="PRK02913.1"/>
    <property type="match status" value="1"/>
</dbReference>
<dbReference type="Pfam" id="PF06173">
    <property type="entry name" value="DUF986"/>
    <property type="match status" value="1"/>
</dbReference>
<dbReference type="PIRSF" id="PIRSF020687">
    <property type="entry name" value="UCP020687"/>
    <property type="match status" value="1"/>
</dbReference>
<comment type="subcellular location">
    <subcellularLocation>
        <location evidence="1">Cell inner membrane</location>
        <topology evidence="1">Multi-pass membrane protein</topology>
    </subcellularLocation>
</comment>
<comment type="similarity">
    <text evidence="1">Belongs to the UPF0266 family.</text>
</comment>
<keyword id="KW-0997">Cell inner membrane</keyword>
<keyword id="KW-1003">Cell membrane</keyword>
<keyword id="KW-0472">Membrane</keyword>
<keyword id="KW-1185">Reference proteome</keyword>
<keyword id="KW-0812">Transmembrane</keyword>
<keyword id="KW-1133">Transmembrane helix</keyword>
<sequence>MTITDLVLILFIAALLAFAIYDQFIMPRRNGPTLLAIPLLRRGRIDSVIFVGLIVILIYNNVTNHGALITTWLLSALALMGFYIFWIRVPKIIFKQKGFFFANVWIEYSLIKAMNLSEDGVLVMQLEQRRLLIRVRNIDNLEKIYKLIVSTQ</sequence>
<reference key="1">
    <citation type="submission" date="2008-05" db="EMBL/GenBank/DDBJ databases">
        <title>Complete sequence of Shigella boydii serotype 18 strain BS512.</title>
        <authorList>
            <person name="Rasko D.A."/>
            <person name="Rosovitz M."/>
            <person name="Maurelli A.T."/>
            <person name="Myers G."/>
            <person name="Seshadri R."/>
            <person name="Cer R."/>
            <person name="Jiang L."/>
            <person name="Ravel J."/>
            <person name="Sebastian Y."/>
        </authorList>
    </citation>
    <scope>NUCLEOTIDE SEQUENCE [LARGE SCALE GENOMIC DNA]</scope>
    <source>
        <strain>CDC 3083-94 / BS512</strain>
    </source>
</reference>
<protein>
    <recommendedName>
        <fullName evidence="1">UPF0266 membrane protein YobD</fullName>
    </recommendedName>
</protein>
<organism>
    <name type="scientific">Shigella boydii serotype 18 (strain CDC 3083-94 / BS512)</name>
    <dbReference type="NCBI Taxonomy" id="344609"/>
    <lineage>
        <taxon>Bacteria</taxon>
        <taxon>Pseudomonadati</taxon>
        <taxon>Pseudomonadota</taxon>
        <taxon>Gammaproteobacteria</taxon>
        <taxon>Enterobacterales</taxon>
        <taxon>Enterobacteriaceae</taxon>
        <taxon>Shigella</taxon>
    </lineage>
</organism>
<feature type="chain" id="PRO_1000136652" description="UPF0266 membrane protein YobD">
    <location>
        <begin position="1"/>
        <end position="152"/>
    </location>
</feature>
<feature type="transmembrane region" description="Helical" evidence="1">
    <location>
        <begin position="6"/>
        <end position="26"/>
    </location>
</feature>
<feature type="transmembrane region" description="Helical" evidence="1">
    <location>
        <begin position="45"/>
        <end position="65"/>
    </location>
</feature>
<feature type="transmembrane region" description="Helical" evidence="1">
    <location>
        <begin position="67"/>
        <end position="87"/>
    </location>
</feature>
<name>YOBD_SHIB3</name>
<accession>B2U460</accession>
<gene>
    <name evidence="1" type="primary">yobD</name>
    <name type="ordered locus">SbBS512_E2086</name>
</gene>
<evidence type="ECO:0000255" key="1">
    <source>
        <dbReference type="HAMAP-Rule" id="MF_01071"/>
    </source>
</evidence>
<proteinExistence type="inferred from homology"/>